<proteinExistence type="evidence at transcript level"/>
<protein>
    <recommendedName>
        <fullName>Interstitial collagenase</fullName>
        <ecNumber>3.4.24.7</ecNumber>
    </recommendedName>
    <alternativeName>
        <fullName>Matrix metalloproteinase-1</fullName>
        <shortName>MMP-1</shortName>
    </alternativeName>
</protein>
<reference key="1">
    <citation type="journal article" date="1987" name="Biochemistry">
        <title>A gene for rabbit synovial cell collagenase: member of a family of metalloproteinases that degrade the connective tissue matrix.</title>
        <authorList>
            <person name="Fini M.E."/>
            <person name="Plucinska I.M."/>
            <person name="Mayer A.S."/>
            <person name="Gross R.H."/>
            <person name="Brinckerhoff C.E."/>
        </authorList>
    </citation>
    <scope>NUCLEOTIDE SEQUENCE [GENOMIC DNA / MRNA]</scope>
    <source>
        <tissue>Synovial cell</tissue>
    </source>
</reference>
<reference key="2">
    <citation type="journal article" date="1986" name="Coll. Relat. Res.">
        <title>Homology between exon-containing portions of rabbit genomic clones for synovial cell collagenase and human foreskin and synovial cell mRNAs.</title>
        <authorList>
            <person name="Fini M.E."/>
            <person name="Austin S.D."/>
            <person name="Holt P.T."/>
            <person name="Ruby P.L."/>
            <person name="Gross R.H."/>
            <person name="White H.D."/>
            <person name="Brinckerhoff C.E."/>
        </authorList>
    </citation>
    <scope>NUCLEOTIDE SEQUENCE [MRNA] OF 449-468</scope>
    <source>
        <strain>New Zealand white</strain>
    </source>
</reference>
<gene>
    <name type="primary">MMP1</name>
</gene>
<comment type="function">
    <text>Cleaves collagens of types I, II, and III at one site in the helical domain. Also cleaves collagens of types VII and X.</text>
</comment>
<comment type="catalytic activity">
    <reaction>
        <text>Cleavage of the triple helix of collagen at about three-quarters of the length of the molecule from the N-terminus, at 775-Gly-|-Ile-776 in the alpha1(I) chain. Cleaves synthetic substrates and alpha-macroglobulins at bonds where P1' is a hydrophobic residue.</text>
        <dbReference type="EC" id="3.4.24.7"/>
    </reaction>
</comment>
<comment type="cofactor">
    <cofactor evidence="1">
        <name>Ca(2+)</name>
        <dbReference type="ChEBI" id="CHEBI:29108"/>
    </cofactor>
    <text evidence="1">Binds 4 Ca(2+) ions per subunit.</text>
</comment>
<comment type="cofactor">
    <cofactor evidence="1">
        <name>Zn(2+)</name>
        <dbReference type="ChEBI" id="CHEBI:29105"/>
    </cofactor>
    <text evidence="1">Binds 2 Zn(2+) ions per subunit.</text>
</comment>
<comment type="activity regulation">
    <text>Can be activated without removal of the activation peptide.</text>
</comment>
<comment type="subcellular location">
    <subcellularLocation>
        <location evidence="1">Secreted</location>
        <location evidence="1">Extracellular space</location>
        <location evidence="1">Extracellular matrix</location>
    </subcellularLocation>
</comment>
<comment type="domain">
    <text>The conserved cysteine present in the cysteine-switch motif binds the catalytic zinc ion, thus inhibiting the enzyme. The dissociation of the cysteine from the zinc ion upon the activation-peptide release activates the enzyme.</text>
</comment>
<comment type="PTM">
    <text evidence="2">Tyrosine phosphorylated in platelets by PKDCC/VLK.</text>
</comment>
<comment type="similarity">
    <text evidence="5">Belongs to the peptidase M10A family.</text>
</comment>
<dbReference type="EC" id="3.4.24.7"/>
<dbReference type="EMBL" id="M17823">
    <property type="protein sequence ID" value="AAB88016.1"/>
    <property type="molecule type" value="Genomic_DNA"/>
</dbReference>
<dbReference type="EMBL" id="M17820">
    <property type="protein sequence ID" value="AAB88016.1"/>
    <property type="status" value="JOINED"/>
    <property type="molecule type" value="Genomic_DNA"/>
</dbReference>
<dbReference type="EMBL" id="M17821">
    <property type="protein sequence ID" value="AAB88016.1"/>
    <property type="status" value="JOINED"/>
    <property type="molecule type" value="Genomic_DNA"/>
</dbReference>
<dbReference type="EMBL" id="M17822">
    <property type="protein sequence ID" value="AAB88016.1"/>
    <property type="status" value="JOINED"/>
    <property type="molecule type" value="Genomic_DNA"/>
</dbReference>
<dbReference type="EMBL" id="M19240">
    <property type="protein sequence ID" value="AAB88016.1"/>
    <property type="status" value="JOINED"/>
    <property type="molecule type" value="mRNA"/>
</dbReference>
<dbReference type="EMBL" id="M25663">
    <property type="protein sequence ID" value="AAA31203.1"/>
    <property type="molecule type" value="mRNA"/>
</dbReference>
<dbReference type="PIR" id="A27500">
    <property type="entry name" value="KCRBI"/>
</dbReference>
<dbReference type="RefSeq" id="NP_001164610.1">
    <property type="nucleotide sequence ID" value="NM_001171139.2"/>
</dbReference>
<dbReference type="SMR" id="P13943"/>
<dbReference type="FunCoup" id="P13943">
    <property type="interactions" value="16"/>
</dbReference>
<dbReference type="STRING" id="9986.ENSOCUP00000036318"/>
<dbReference type="MEROPS" id="M10.001"/>
<dbReference type="GlyCosmos" id="P13943">
    <property type="glycosylation" value="1 site, No reported glycans"/>
</dbReference>
<dbReference type="PaxDb" id="9986-ENSOCUP00000015428"/>
<dbReference type="Ensembl" id="ENSOCUT00000017958.4">
    <property type="protein sequence ID" value="ENSOCUP00000015428.3"/>
    <property type="gene ID" value="ENSOCUG00000017958.4"/>
</dbReference>
<dbReference type="GeneID" id="100009110"/>
<dbReference type="KEGG" id="ocu:100009110"/>
<dbReference type="CTD" id="4312"/>
<dbReference type="eggNOG" id="KOG1565">
    <property type="taxonomic scope" value="Eukaryota"/>
</dbReference>
<dbReference type="GeneTree" id="ENSGT00940000154907"/>
<dbReference type="HOGENOM" id="CLU_015489_6_0_1"/>
<dbReference type="InParanoid" id="P13943"/>
<dbReference type="OMA" id="LHGYPKD"/>
<dbReference type="OrthoDB" id="406838at2759"/>
<dbReference type="Proteomes" id="UP000001811">
    <property type="component" value="Chromosome 1"/>
</dbReference>
<dbReference type="Bgee" id="ENSOCUG00000017958">
    <property type="expression patterns" value="Expressed in zone of skin and 6 other cell types or tissues"/>
</dbReference>
<dbReference type="GO" id="GO:0031012">
    <property type="term" value="C:extracellular matrix"/>
    <property type="evidence" value="ECO:0007669"/>
    <property type="project" value="InterPro"/>
</dbReference>
<dbReference type="GO" id="GO:0005576">
    <property type="term" value="C:extracellular region"/>
    <property type="evidence" value="ECO:0007669"/>
    <property type="project" value="UniProtKB-KW"/>
</dbReference>
<dbReference type="GO" id="GO:0004222">
    <property type="term" value="F:metalloendopeptidase activity"/>
    <property type="evidence" value="ECO:0007669"/>
    <property type="project" value="UniProtKB-EC"/>
</dbReference>
<dbReference type="GO" id="GO:0008233">
    <property type="term" value="F:peptidase activity"/>
    <property type="evidence" value="ECO:0000250"/>
    <property type="project" value="UniProtKB"/>
</dbReference>
<dbReference type="GO" id="GO:0008270">
    <property type="term" value="F:zinc ion binding"/>
    <property type="evidence" value="ECO:0007669"/>
    <property type="project" value="InterPro"/>
</dbReference>
<dbReference type="GO" id="GO:0071492">
    <property type="term" value="P:cellular response to UV-A"/>
    <property type="evidence" value="ECO:0000250"/>
    <property type="project" value="UniProtKB"/>
</dbReference>
<dbReference type="GO" id="GO:0030574">
    <property type="term" value="P:collagen catabolic process"/>
    <property type="evidence" value="ECO:0007669"/>
    <property type="project" value="UniProtKB-KW"/>
</dbReference>
<dbReference type="GO" id="GO:0030198">
    <property type="term" value="P:extracellular matrix organization"/>
    <property type="evidence" value="ECO:0007669"/>
    <property type="project" value="TreeGrafter"/>
</dbReference>
<dbReference type="GO" id="GO:0006508">
    <property type="term" value="P:proteolysis"/>
    <property type="evidence" value="ECO:0007669"/>
    <property type="project" value="UniProtKB-KW"/>
</dbReference>
<dbReference type="CDD" id="cd00094">
    <property type="entry name" value="HX"/>
    <property type="match status" value="1"/>
</dbReference>
<dbReference type="CDD" id="cd04278">
    <property type="entry name" value="ZnMc_MMP"/>
    <property type="match status" value="1"/>
</dbReference>
<dbReference type="FunFam" id="3.40.390.10:FF:000007">
    <property type="entry name" value="Collagenase 3"/>
    <property type="match status" value="1"/>
</dbReference>
<dbReference type="FunFam" id="2.110.10.10:FF:000002">
    <property type="entry name" value="Matrix metallopeptidase 3"/>
    <property type="match status" value="1"/>
</dbReference>
<dbReference type="Gene3D" id="3.40.390.10">
    <property type="entry name" value="Collagenase (Catalytic Domain)"/>
    <property type="match status" value="1"/>
</dbReference>
<dbReference type="Gene3D" id="2.110.10.10">
    <property type="entry name" value="Hemopexin-like domain"/>
    <property type="match status" value="1"/>
</dbReference>
<dbReference type="InterPro" id="IPR000585">
    <property type="entry name" value="Hemopexin-like_dom"/>
</dbReference>
<dbReference type="InterPro" id="IPR036375">
    <property type="entry name" value="Hemopexin-like_dom_sf"/>
</dbReference>
<dbReference type="InterPro" id="IPR018487">
    <property type="entry name" value="Hemopexin-like_repeat"/>
</dbReference>
<dbReference type="InterPro" id="IPR018486">
    <property type="entry name" value="Hemopexin_CS"/>
</dbReference>
<dbReference type="InterPro" id="IPR033739">
    <property type="entry name" value="M10A_MMP"/>
</dbReference>
<dbReference type="InterPro" id="IPR024079">
    <property type="entry name" value="MetalloPept_cat_dom_sf"/>
</dbReference>
<dbReference type="InterPro" id="IPR001818">
    <property type="entry name" value="Pept_M10_metallopeptidase"/>
</dbReference>
<dbReference type="InterPro" id="IPR021190">
    <property type="entry name" value="Pept_M10A"/>
</dbReference>
<dbReference type="InterPro" id="IPR021158">
    <property type="entry name" value="Pept_M10A_Zn_BS"/>
</dbReference>
<dbReference type="InterPro" id="IPR006026">
    <property type="entry name" value="Peptidase_Metallo"/>
</dbReference>
<dbReference type="InterPro" id="IPR002477">
    <property type="entry name" value="Peptidoglycan-bd-like"/>
</dbReference>
<dbReference type="InterPro" id="IPR036365">
    <property type="entry name" value="PGBD-like_sf"/>
</dbReference>
<dbReference type="PANTHER" id="PTHR10201:SF151">
    <property type="entry name" value="INTERSTITIAL COLLAGENASE"/>
    <property type="match status" value="1"/>
</dbReference>
<dbReference type="PANTHER" id="PTHR10201">
    <property type="entry name" value="MATRIX METALLOPROTEINASE"/>
    <property type="match status" value="1"/>
</dbReference>
<dbReference type="Pfam" id="PF00045">
    <property type="entry name" value="Hemopexin"/>
    <property type="match status" value="4"/>
</dbReference>
<dbReference type="Pfam" id="PF00413">
    <property type="entry name" value="Peptidase_M10"/>
    <property type="match status" value="1"/>
</dbReference>
<dbReference type="Pfam" id="PF01471">
    <property type="entry name" value="PG_binding_1"/>
    <property type="match status" value="1"/>
</dbReference>
<dbReference type="PIRSF" id="PIRSF001191">
    <property type="entry name" value="Peptidase_M10A_matrix"/>
    <property type="match status" value="1"/>
</dbReference>
<dbReference type="PRINTS" id="PR00138">
    <property type="entry name" value="MATRIXIN"/>
</dbReference>
<dbReference type="SMART" id="SM00120">
    <property type="entry name" value="HX"/>
    <property type="match status" value="4"/>
</dbReference>
<dbReference type="SMART" id="SM00235">
    <property type="entry name" value="ZnMc"/>
    <property type="match status" value="1"/>
</dbReference>
<dbReference type="SUPFAM" id="SSF50923">
    <property type="entry name" value="Hemopexin-like domain"/>
    <property type="match status" value="1"/>
</dbReference>
<dbReference type="SUPFAM" id="SSF55486">
    <property type="entry name" value="Metalloproteases ('zincins'), catalytic domain"/>
    <property type="match status" value="1"/>
</dbReference>
<dbReference type="SUPFAM" id="SSF47090">
    <property type="entry name" value="PGBD-like"/>
    <property type="match status" value="1"/>
</dbReference>
<dbReference type="PROSITE" id="PS00546">
    <property type="entry name" value="CYSTEINE_SWITCH"/>
    <property type="match status" value="1"/>
</dbReference>
<dbReference type="PROSITE" id="PS00024">
    <property type="entry name" value="HEMOPEXIN"/>
    <property type="match status" value="1"/>
</dbReference>
<dbReference type="PROSITE" id="PS51642">
    <property type="entry name" value="HEMOPEXIN_2"/>
    <property type="match status" value="4"/>
</dbReference>
<dbReference type="PROSITE" id="PS00142">
    <property type="entry name" value="ZINC_PROTEASE"/>
    <property type="match status" value="1"/>
</dbReference>
<feature type="signal peptide">
    <location>
        <begin position="1"/>
        <end position="18"/>
    </location>
</feature>
<feature type="propeptide" id="PRO_0000028710" description="Activation peptide">
    <location>
        <begin position="19"/>
        <end position="98"/>
    </location>
</feature>
<feature type="chain" id="PRO_0000028711" description="Interstitial collagenase">
    <location>
        <begin position="99"/>
        <end position="468"/>
    </location>
</feature>
<feature type="repeat" description="Hemopexin 1">
    <location>
        <begin position="274"/>
        <end position="323"/>
    </location>
</feature>
<feature type="repeat" description="Hemopexin 2">
    <location>
        <begin position="324"/>
        <end position="370"/>
    </location>
</feature>
<feature type="repeat" description="Hemopexin 3">
    <location>
        <begin position="373"/>
        <end position="421"/>
    </location>
</feature>
<feature type="repeat" description="Hemopexin 4">
    <location>
        <begin position="422"/>
        <end position="465"/>
    </location>
</feature>
<feature type="short sequence motif" description="Cysteine switch" evidence="1">
    <location>
        <begin position="89"/>
        <end position="96"/>
    </location>
</feature>
<feature type="active site" evidence="4">
    <location>
        <position position="218"/>
    </location>
</feature>
<feature type="binding site" description="in inhibited form" evidence="1">
    <location>
        <position position="91"/>
    </location>
    <ligand>
        <name>Zn(2+)</name>
        <dbReference type="ChEBI" id="CHEBI:29105"/>
        <label>2</label>
        <note>catalytic</note>
    </ligand>
</feature>
<feature type="binding site" evidence="1">
    <location>
        <position position="123"/>
    </location>
    <ligand>
        <name>Ca(2+)</name>
        <dbReference type="ChEBI" id="CHEBI:29108"/>
        <label>1</label>
    </ligand>
</feature>
<feature type="binding site" evidence="1">
    <location>
        <position position="157"/>
    </location>
    <ligand>
        <name>Ca(2+)</name>
        <dbReference type="ChEBI" id="CHEBI:29108"/>
        <label>2</label>
    </ligand>
</feature>
<feature type="binding site" evidence="1">
    <location>
        <position position="167"/>
    </location>
    <ligand>
        <name>Zn(2+)</name>
        <dbReference type="ChEBI" id="CHEBI:29105"/>
        <label>1</label>
    </ligand>
</feature>
<feature type="binding site" evidence="1">
    <location>
        <position position="169"/>
    </location>
    <ligand>
        <name>Zn(2+)</name>
        <dbReference type="ChEBI" id="CHEBI:29105"/>
        <label>1</label>
    </ligand>
</feature>
<feature type="binding site" evidence="1">
    <location>
        <position position="174"/>
    </location>
    <ligand>
        <name>Ca(2+)</name>
        <dbReference type="ChEBI" id="CHEBI:29108"/>
        <label>3</label>
    </ligand>
</feature>
<feature type="binding site" evidence="1">
    <location>
        <position position="175"/>
    </location>
    <ligand>
        <name>Ca(2+)</name>
        <dbReference type="ChEBI" id="CHEBI:29108"/>
        <label>3</label>
    </ligand>
</feature>
<feature type="binding site" evidence="1">
    <location>
        <position position="177"/>
    </location>
    <ligand>
        <name>Ca(2+)</name>
        <dbReference type="ChEBI" id="CHEBI:29108"/>
        <label>3</label>
    </ligand>
</feature>
<feature type="binding site" evidence="1">
    <location>
        <position position="179"/>
    </location>
    <ligand>
        <name>Ca(2+)</name>
        <dbReference type="ChEBI" id="CHEBI:29108"/>
        <label>3</label>
    </ligand>
</feature>
<feature type="binding site" evidence="1">
    <location>
        <position position="182"/>
    </location>
    <ligand>
        <name>Zn(2+)</name>
        <dbReference type="ChEBI" id="CHEBI:29105"/>
        <label>1</label>
    </ligand>
</feature>
<feature type="binding site" evidence="1">
    <location>
        <position position="189"/>
    </location>
    <ligand>
        <name>Ca(2+)</name>
        <dbReference type="ChEBI" id="CHEBI:29108"/>
        <label>2</label>
    </ligand>
</feature>
<feature type="binding site" evidence="1">
    <location>
        <position position="191"/>
    </location>
    <ligand>
        <name>Ca(2+)</name>
        <dbReference type="ChEBI" id="CHEBI:29108"/>
        <label>2</label>
    </ligand>
</feature>
<feature type="binding site" evidence="1">
    <location>
        <position position="193"/>
    </location>
    <ligand>
        <name>Ca(2+)</name>
        <dbReference type="ChEBI" id="CHEBI:29108"/>
        <label>2</label>
    </ligand>
</feature>
<feature type="binding site" evidence="1">
    <location>
        <position position="195"/>
    </location>
    <ligand>
        <name>Zn(2+)</name>
        <dbReference type="ChEBI" id="CHEBI:29105"/>
        <label>1</label>
    </ligand>
</feature>
<feature type="binding site" evidence="1">
    <location>
        <position position="197"/>
    </location>
    <ligand>
        <name>Ca(2+)</name>
        <dbReference type="ChEBI" id="CHEBI:29108"/>
        <label>3</label>
    </ligand>
</feature>
<feature type="binding site" evidence="1">
    <location>
        <position position="198"/>
    </location>
    <ligand>
        <name>Ca(2+)</name>
        <dbReference type="ChEBI" id="CHEBI:29108"/>
        <label>1</label>
    </ligand>
</feature>
<feature type="binding site" evidence="1">
    <location>
        <position position="200"/>
    </location>
    <ligand>
        <name>Ca(2+)</name>
        <dbReference type="ChEBI" id="CHEBI:29108"/>
        <label>3</label>
    </ligand>
</feature>
<feature type="binding site" evidence="1">
    <location>
        <position position="217"/>
    </location>
    <ligand>
        <name>Zn(2+)</name>
        <dbReference type="ChEBI" id="CHEBI:29105"/>
        <label>2</label>
        <note>catalytic</note>
    </ligand>
</feature>
<feature type="binding site" evidence="1">
    <location>
        <position position="221"/>
    </location>
    <ligand>
        <name>Zn(2+)</name>
        <dbReference type="ChEBI" id="CHEBI:29105"/>
        <label>2</label>
        <note>catalytic</note>
    </ligand>
</feature>
<feature type="binding site" evidence="1">
    <location>
        <position position="227"/>
    </location>
    <ligand>
        <name>Zn(2+)</name>
        <dbReference type="ChEBI" id="CHEBI:29105"/>
        <label>2</label>
        <note>catalytic</note>
    </ligand>
</feature>
<feature type="binding site" evidence="1">
    <location>
        <position position="284"/>
    </location>
    <ligand>
        <name>Ca(2+)</name>
        <dbReference type="ChEBI" id="CHEBI:29108"/>
        <label>4</label>
    </ligand>
</feature>
<feature type="binding site" evidence="1">
    <location>
        <position position="328"/>
    </location>
    <ligand>
        <name>Ca(2+)</name>
        <dbReference type="ChEBI" id="CHEBI:29108"/>
        <label>4</label>
    </ligand>
</feature>
<feature type="binding site" evidence="1">
    <location>
        <position position="377"/>
    </location>
    <ligand>
        <name>Ca(2+)</name>
        <dbReference type="ChEBI" id="CHEBI:29108"/>
        <label>4</label>
    </ligand>
</feature>
<feature type="binding site" evidence="1">
    <location>
        <position position="426"/>
    </location>
    <ligand>
        <name>Ca(2+)</name>
        <dbReference type="ChEBI" id="CHEBI:29108"/>
        <label>4</label>
    </ligand>
</feature>
<feature type="modified residue" description="Phosphothreonine" evidence="2">
    <location>
        <position position="273"/>
    </location>
</feature>
<feature type="modified residue" description="Phosphotyrosine; by PKDCC" evidence="2">
    <location>
        <position position="359"/>
    </location>
</feature>
<feature type="glycosylation site" description="N-linked (GlcNAc...) asparagine" evidence="3">
    <location>
        <position position="119"/>
    </location>
</feature>
<feature type="disulfide bond" evidence="1">
    <location>
        <begin position="277"/>
        <end position="465"/>
    </location>
</feature>
<keyword id="KW-0106">Calcium</keyword>
<keyword id="KW-0177">Collagen degradation</keyword>
<keyword id="KW-1015">Disulfide bond</keyword>
<keyword id="KW-0272">Extracellular matrix</keyword>
<keyword id="KW-0325">Glycoprotein</keyword>
<keyword id="KW-0378">Hydrolase</keyword>
<keyword id="KW-0479">Metal-binding</keyword>
<keyword id="KW-0482">Metalloprotease</keyword>
<keyword id="KW-0597">Phosphoprotein</keyword>
<keyword id="KW-0645">Protease</keyword>
<keyword id="KW-1185">Reference proteome</keyword>
<keyword id="KW-0677">Repeat</keyword>
<keyword id="KW-0964">Secreted</keyword>
<keyword id="KW-0732">Signal</keyword>
<keyword id="KW-0862">Zinc</keyword>
<keyword id="KW-0865">Zymogen</keyword>
<accession>P13943</accession>
<name>MMP1_RABIT</name>
<organism>
    <name type="scientific">Oryctolagus cuniculus</name>
    <name type="common">Rabbit</name>
    <dbReference type="NCBI Taxonomy" id="9986"/>
    <lineage>
        <taxon>Eukaryota</taxon>
        <taxon>Metazoa</taxon>
        <taxon>Chordata</taxon>
        <taxon>Craniata</taxon>
        <taxon>Vertebrata</taxon>
        <taxon>Euteleostomi</taxon>
        <taxon>Mammalia</taxon>
        <taxon>Eutheria</taxon>
        <taxon>Euarchontoglires</taxon>
        <taxon>Glires</taxon>
        <taxon>Lagomorpha</taxon>
        <taxon>Leporidae</taxon>
        <taxon>Oryctolagus</taxon>
    </lineage>
</organism>
<evidence type="ECO:0000250" key="1"/>
<evidence type="ECO:0000250" key="2">
    <source>
        <dbReference type="UniProtKB" id="P03956"/>
    </source>
</evidence>
<evidence type="ECO:0000255" key="3"/>
<evidence type="ECO:0000255" key="4">
    <source>
        <dbReference type="PROSITE-ProRule" id="PRU10095"/>
    </source>
</evidence>
<evidence type="ECO:0000305" key="5"/>
<sequence length="468" mass="53740">MPGLPLLLLLLWGVGSHGFPAASETQEQDVEMVQKYLENYYNLKDDWRKIPKQRGNGLAVEKLKQMQEFFGLKVTGKPDAETLKMMKQPRCGVPDVAQFVLTPGNPRWEQTHLTYRIENYTPDLSRADVDNAIEKAFQLWSNVTPLTFTKVSKGQADIMISFVRGDHRDNSPFDGPEGQLAHAFQPGLGIGGDVHFDEDDRWTKDFRNYNLYRVAAHELGHSLGLSHSTDIGALMYPNYMFSGDVQLAQDDIDGIQAIYGPSQNPSQPVGPQTPKVCDSKLTFDAITTIRGEIMFFKDRFYMRANPYYSEVELNFISVFWPHLPNGLQAAYEVAHRDEILFFKGNKYWTVQGQNELPGYPKDIHSSFGFPRSVNHIDAAVSEEDTGKTYFFVANKYWRYDEYKRSMDAGYPKMIEYDFPGIGNKVDAVFKKDGFFYFFHGTRQYKFDPKTKRILTLQKANSWFNCRKN</sequence>